<accession>Q8CHP5</accession>
<accession>Q80YD2</accession>
<keyword id="KW-0007">Acetylation</keyword>
<keyword id="KW-0025">Alternative splicing</keyword>
<keyword id="KW-0175">Coiled coil</keyword>
<keyword id="KW-0963">Cytoplasm</keyword>
<keyword id="KW-0866">Nonsense-mediated mRNA decay</keyword>
<keyword id="KW-0539">Nucleus</keyword>
<keyword id="KW-0597">Phosphoprotein</keyword>
<keyword id="KW-1185">Reference proteome</keyword>
<keyword id="KW-0810">Translation regulation</keyword>
<feature type="chain" id="PRO_0000287286" description="Partner of Y14 and mago">
    <location>
        <begin position="1"/>
        <end position="203"/>
    </location>
</feature>
<feature type="region of interest" description="Required for interaction with MAGOH and RBM8A" evidence="1">
    <location>
        <begin position="1"/>
        <end position="33"/>
    </location>
</feature>
<feature type="region of interest" description="Disordered" evidence="5">
    <location>
        <begin position="1"/>
        <end position="32"/>
    </location>
</feature>
<feature type="region of interest" description="Disordered" evidence="5">
    <location>
        <begin position="55"/>
        <end position="149"/>
    </location>
</feature>
<feature type="region of interest" description="eIF2A-like" evidence="1">
    <location>
        <begin position="151"/>
        <end position="203"/>
    </location>
</feature>
<feature type="coiled-coil region" evidence="4">
    <location>
        <begin position="82"/>
        <end position="117"/>
    </location>
</feature>
<feature type="coiled-coil region" evidence="4">
    <location>
        <begin position="144"/>
        <end position="203"/>
    </location>
</feature>
<feature type="compositionally biased region" description="Basic residues" evidence="5">
    <location>
        <begin position="86"/>
        <end position="97"/>
    </location>
</feature>
<feature type="compositionally biased region" description="Basic and acidic residues" evidence="5">
    <location>
        <begin position="98"/>
        <end position="113"/>
    </location>
</feature>
<feature type="compositionally biased region" description="Polar residues" evidence="5">
    <location>
        <begin position="122"/>
        <end position="131"/>
    </location>
</feature>
<feature type="compositionally biased region" description="Low complexity" evidence="5">
    <location>
        <begin position="132"/>
        <end position="147"/>
    </location>
</feature>
<feature type="modified residue" description="N-acetylmethionine" evidence="3">
    <location>
        <position position="1"/>
    </location>
</feature>
<feature type="modified residue" description="Phosphoserine" evidence="3">
    <location>
        <position position="64"/>
    </location>
</feature>
<feature type="modified residue" description="Phosphothreonine" evidence="3">
    <location>
        <position position="72"/>
    </location>
</feature>
<feature type="modified residue" description="Phosphoserine" evidence="3">
    <location>
        <position position="116"/>
    </location>
</feature>
<feature type="splice variant" id="VSP_025431" description="In isoform 2." evidence="6">
    <original>METASTPEATGT</original>
    <variation>MATPYVTDETG</variation>
    <location>
        <begin position="1"/>
        <end position="12"/>
    </location>
</feature>
<feature type="sequence conflict" description="In Ref. 1; CAD30678." evidence="7" ref="1">
    <original>K</original>
    <variation>N</variation>
    <location>
        <position position="159"/>
    </location>
</feature>
<feature type="sequence conflict" description="In Ref. 1; CAD30678." evidence="7" ref="1">
    <original>R</original>
    <variation>P</variation>
    <location>
        <position position="169"/>
    </location>
</feature>
<feature type="sequence conflict" description="In Ref. 1; CAD30678." evidence="7" ref="1">
    <original>SQPSR</original>
    <variation>THPTK</variation>
    <location>
        <begin position="176"/>
        <end position="180"/>
    </location>
</feature>
<organism>
    <name type="scientific">Mus musculus</name>
    <name type="common">Mouse</name>
    <dbReference type="NCBI Taxonomy" id="10090"/>
    <lineage>
        <taxon>Eukaryota</taxon>
        <taxon>Metazoa</taxon>
        <taxon>Chordata</taxon>
        <taxon>Craniata</taxon>
        <taxon>Vertebrata</taxon>
        <taxon>Euteleostomi</taxon>
        <taxon>Mammalia</taxon>
        <taxon>Eutheria</taxon>
        <taxon>Euarchontoglires</taxon>
        <taxon>Glires</taxon>
        <taxon>Rodentia</taxon>
        <taxon>Myomorpha</taxon>
        <taxon>Muroidea</taxon>
        <taxon>Muridae</taxon>
        <taxon>Murinae</taxon>
        <taxon>Mus</taxon>
        <taxon>Mus</taxon>
    </lineage>
</organism>
<reference key="1">
    <citation type="journal article" date="2002" name="J. Cell Biol.">
        <title>REF1/Aly and the additional exon junction complex proteins are dispensable for nuclear mRNA export.</title>
        <authorList>
            <person name="Gatfield D."/>
            <person name="Izaurralde E."/>
        </authorList>
    </citation>
    <scope>NUCLEOTIDE SEQUENCE [MRNA] (ISOFORM 1)</scope>
</reference>
<reference key="2">
    <citation type="journal article" date="2004" name="Genome Res.">
        <title>The status, quality, and expansion of the NIH full-length cDNA project: the Mammalian Gene Collection (MGC).</title>
        <authorList>
            <consortium name="The MGC Project Team"/>
        </authorList>
    </citation>
    <scope>NUCLEOTIDE SEQUENCE [LARGE SCALE MRNA] (ISOFORM 2)</scope>
    <source>
        <tissue>Testis</tissue>
    </source>
</reference>
<reference key="3">
    <citation type="journal article" date="2010" name="Cell">
        <title>A tissue-specific atlas of mouse protein phosphorylation and expression.</title>
        <authorList>
            <person name="Huttlin E.L."/>
            <person name="Jedrychowski M.P."/>
            <person name="Elias J.E."/>
            <person name="Goswami T."/>
            <person name="Rad R."/>
            <person name="Beausoleil S.A."/>
            <person name="Villen J."/>
            <person name="Haas W."/>
            <person name="Sowa M.E."/>
            <person name="Gygi S.P."/>
        </authorList>
    </citation>
    <scope>IDENTIFICATION BY MASS SPECTROMETRY [LARGE SCALE ANALYSIS]</scope>
    <source>
        <tissue>Liver</tissue>
        <tissue>Pancreas</tissue>
        <tissue>Spleen</tissue>
        <tissue>Testis</tissue>
    </source>
</reference>
<sequence length="203" mass="22690">METASTPEATGTGKYIASTQRPDGTWRKQRRVKEGYVPQEEVPVYENKYVKFFKSKPELPPGLSPEATTPVTPSRPEGGETGLSKTAKRNLKRKEKRRQQQEKEAEALSRTLDKVSLGDTAQIPSALQGPQATPLAASDPSDSAATTEKAKKIKNLRKKLRQVEELQQRIQAGEVSQPSREQLEKLARRRVLEEELEDLELGL</sequence>
<protein>
    <recommendedName>
        <fullName evidence="2">Partner of Y14 and mago</fullName>
    </recommendedName>
    <alternativeName>
        <fullName evidence="8">PYM homolog 1 exon junction complex-associated factor</fullName>
    </alternativeName>
    <alternativeName>
        <fullName>Protein wibg homolog</fullName>
    </alternativeName>
</protein>
<gene>
    <name evidence="8" type="primary">Pym1</name>
    <name type="synonym">Pym</name>
    <name type="synonym">Wibg</name>
</gene>
<dbReference type="EMBL" id="AJ459407">
    <property type="protein sequence ID" value="CAD30678.1"/>
    <property type="molecule type" value="mRNA"/>
</dbReference>
<dbReference type="EMBL" id="BC049647">
    <property type="protein sequence ID" value="AAH49647.1"/>
    <property type="molecule type" value="mRNA"/>
</dbReference>
<dbReference type="CCDS" id="CCDS48729.1">
    <molecule id="Q8CHP5-1"/>
</dbReference>
<dbReference type="CCDS" id="CCDS48730.1">
    <molecule id="Q8CHP5-2"/>
</dbReference>
<dbReference type="RefSeq" id="NP_001164340.1">
    <molecule id="Q8CHP5-2"/>
    <property type="nucleotide sequence ID" value="NM_001170869.2"/>
</dbReference>
<dbReference type="RefSeq" id="NP_084376.2">
    <molecule id="Q8CHP5-1"/>
    <property type="nucleotide sequence ID" value="NM_030100.4"/>
</dbReference>
<dbReference type="SMR" id="Q8CHP5"/>
<dbReference type="BioGRID" id="219395">
    <property type="interactions" value="15"/>
</dbReference>
<dbReference type="FunCoup" id="Q8CHP5">
    <property type="interactions" value="2867"/>
</dbReference>
<dbReference type="IntAct" id="Q8CHP5">
    <property type="interactions" value="1"/>
</dbReference>
<dbReference type="MINT" id="Q8CHP5"/>
<dbReference type="STRING" id="10090.ENSMUSP00000129789"/>
<dbReference type="iPTMnet" id="Q8CHP5"/>
<dbReference type="PhosphoSitePlus" id="Q8CHP5"/>
<dbReference type="jPOST" id="Q8CHP5"/>
<dbReference type="PaxDb" id="10090-ENSMUSP00000129789"/>
<dbReference type="PeptideAtlas" id="Q8CHP5"/>
<dbReference type="ProteomicsDB" id="301854">
    <molecule id="Q8CHP5-1"/>
</dbReference>
<dbReference type="ProteomicsDB" id="301855">
    <molecule id="Q8CHP5-2"/>
</dbReference>
<dbReference type="Pumba" id="Q8CHP5"/>
<dbReference type="Antibodypedia" id="48574">
    <property type="antibodies" value="235 antibodies from 20 providers"/>
</dbReference>
<dbReference type="DNASU" id="78428"/>
<dbReference type="Ensembl" id="ENSMUST00000065210.10">
    <molecule id="Q8CHP5-2"/>
    <property type="protein sequence ID" value="ENSMUSP00000067623.9"/>
    <property type="gene ID" value="ENSMUSG00000064030.16"/>
</dbReference>
<dbReference type="Ensembl" id="ENSMUST00000163377.10">
    <molecule id="Q8CHP5-1"/>
    <property type="protein sequence ID" value="ENSMUSP00000129789.3"/>
    <property type="gene ID" value="ENSMUSG00000064030.16"/>
</dbReference>
<dbReference type="GeneID" id="78428"/>
<dbReference type="KEGG" id="mmu:78428"/>
<dbReference type="UCSC" id="uc007hod.3">
    <molecule id="Q8CHP5-1"/>
    <property type="organism name" value="mouse"/>
</dbReference>
<dbReference type="UCSC" id="uc007hoe.3">
    <molecule id="Q8CHP5-2"/>
    <property type="organism name" value="mouse"/>
</dbReference>
<dbReference type="AGR" id="MGI:1925678"/>
<dbReference type="CTD" id="84305"/>
<dbReference type="MGI" id="MGI:1925678">
    <property type="gene designation" value="Pym1"/>
</dbReference>
<dbReference type="VEuPathDB" id="HostDB:ENSMUSG00000064030"/>
<dbReference type="eggNOG" id="KOG4325">
    <property type="taxonomic scope" value="Eukaryota"/>
</dbReference>
<dbReference type="GeneTree" id="ENSGT00730000111107"/>
<dbReference type="HOGENOM" id="CLU_074603_3_0_1"/>
<dbReference type="InParanoid" id="Q8CHP5"/>
<dbReference type="OMA" id="IPGCADS"/>
<dbReference type="OrthoDB" id="21625at2759"/>
<dbReference type="PhylomeDB" id="Q8CHP5"/>
<dbReference type="TreeFam" id="TF324615"/>
<dbReference type="BioGRID-ORCS" id="78428">
    <property type="hits" value="3 hits in 45 CRISPR screens"/>
</dbReference>
<dbReference type="CD-CODE" id="CE726F99">
    <property type="entry name" value="Postsynaptic density"/>
</dbReference>
<dbReference type="ChiTaRS" id="Pym1">
    <property type="organism name" value="mouse"/>
</dbReference>
<dbReference type="PRO" id="PR:Q8CHP5"/>
<dbReference type="Proteomes" id="UP000000589">
    <property type="component" value="Chromosome 10"/>
</dbReference>
<dbReference type="RNAct" id="Q8CHP5">
    <property type="molecule type" value="protein"/>
</dbReference>
<dbReference type="Bgee" id="ENSMUSG00000064030">
    <property type="expression patterns" value="Expressed in yolk sac and 67 other cell types or tissues"/>
</dbReference>
<dbReference type="ExpressionAtlas" id="Q8CHP5">
    <property type="expression patterns" value="baseline and differential"/>
</dbReference>
<dbReference type="GO" id="GO:0030054">
    <property type="term" value="C:cell junction"/>
    <property type="evidence" value="ECO:0007669"/>
    <property type="project" value="Ensembl"/>
</dbReference>
<dbReference type="GO" id="GO:0005829">
    <property type="term" value="C:cytosol"/>
    <property type="evidence" value="ECO:0007669"/>
    <property type="project" value="Ensembl"/>
</dbReference>
<dbReference type="GO" id="GO:0035145">
    <property type="term" value="C:exon-exon junction complex"/>
    <property type="evidence" value="ECO:0000250"/>
    <property type="project" value="UniProtKB"/>
</dbReference>
<dbReference type="GO" id="GO:0005730">
    <property type="term" value="C:nucleolus"/>
    <property type="evidence" value="ECO:0007669"/>
    <property type="project" value="UniProtKB-SubCell"/>
</dbReference>
<dbReference type="GO" id="GO:0005654">
    <property type="term" value="C:nucleoplasm"/>
    <property type="evidence" value="ECO:0007669"/>
    <property type="project" value="UniProtKB-SubCell"/>
</dbReference>
<dbReference type="GO" id="GO:0043022">
    <property type="term" value="F:ribosome binding"/>
    <property type="evidence" value="ECO:0000250"/>
    <property type="project" value="UniProtKB"/>
</dbReference>
<dbReference type="GO" id="GO:1903259">
    <property type="term" value="P:exon-exon junction complex disassembly"/>
    <property type="evidence" value="ECO:0007669"/>
    <property type="project" value="Ensembl"/>
</dbReference>
<dbReference type="GO" id="GO:0000184">
    <property type="term" value="P:nuclear-transcribed mRNA catabolic process, nonsense-mediated decay"/>
    <property type="evidence" value="ECO:0000250"/>
    <property type="project" value="UniProtKB"/>
</dbReference>
<dbReference type="GO" id="GO:0045727">
    <property type="term" value="P:positive regulation of translation"/>
    <property type="evidence" value="ECO:0000250"/>
    <property type="project" value="UniProtKB"/>
</dbReference>
<dbReference type="InterPro" id="IPR039333">
    <property type="entry name" value="PYM1"/>
</dbReference>
<dbReference type="InterPro" id="IPR015362">
    <property type="entry name" value="WIBG_mago-bd"/>
</dbReference>
<dbReference type="InterPro" id="IPR036348">
    <property type="entry name" value="WIBG_N_sf"/>
</dbReference>
<dbReference type="PANTHER" id="PTHR22959:SF0">
    <property type="entry name" value="PARTNER OF Y14 AND MAGO"/>
    <property type="match status" value="1"/>
</dbReference>
<dbReference type="PANTHER" id="PTHR22959">
    <property type="entry name" value="PYM PROTEIN"/>
    <property type="match status" value="1"/>
</dbReference>
<dbReference type="Pfam" id="PF09282">
    <property type="entry name" value="Mago-bind"/>
    <property type="match status" value="1"/>
</dbReference>
<dbReference type="SMART" id="SM01273">
    <property type="entry name" value="Mago-bind"/>
    <property type="match status" value="1"/>
</dbReference>
<dbReference type="SUPFAM" id="SSF101931">
    <property type="entry name" value="Pym (Within the bgcn gene intron protein, WIBG), N-terminal domain"/>
    <property type="match status" value="1"/>
</dbReference>
<proteinExistence type="evidence at protein level"/>
<evidence type="ECO:0000250" key="1"/>
<evidence type="ECO:0000250" key="2">
    <source>
        <dbReference type="UniProtKB" id="P82804"/>
    </source>
</evidence>
<evidence type="ECO:0000250" key="3">
    <source>
        <dbReference type="UniProtKB" id="Q9BRP8"/>
    </source>
</evidence>
<evidence type="ECO:0000255" key="4"/>
<evidence type="ECO:0000256" key="5">
    <source>
        <dbReference type="SAM" id="MobiDB-lite"/>
    </source>
</evidence>
<evidence type="ECO:0000303" key="6">
    <source>
    </source>
</evidence>
<evidence type="ECO:0000305" key="7"/>
<evidence type="ECO:0000312" key="8">
    <source>
        <dbReference type="MGI" id="MGI:1925678"/>
    </source>
</evidence>
<name>PYM1_MOUSE</name>
<comment type="function">
    <text evidence="1">Key regulator of the exon junction complex (EJC), a multiprotein complex that associates immediately upstream of the exon-exon junction on mRNAs and serves as a positional landmark for the intron exon structure of genes and directs post-transcriptional processes in the cytoplasm such as mRNA export, nonsense-mediated mRNA decay (NMD) or translation. Acts as an EJC disassembly factor, allowing translation-dependent EJC removal and recycling by disrupting mature EJC from spliced mRNAs. Its association with the 40S ribosomal subunit probably prevents a translation-independent disassembly of the EJC from spliced mRNAs, by restricting its activity to mRNAs that have been translated. Interferes with NMD and enhances translation of spliced mRNAs, probably by antagonizing EJC functions (By similarity).</text>
</comment>
<comment type="subunit">
    <text evidence="1">Interacts (via N-terminus) with MAGOH and RBM8A; the interaction is direct. Associates (eIF2A-like region) with the 40S ribosomal subunit and the 48S preinitiation complex (By similarity).</text>
</comment>
<comment type="subcellular location">
    <subcellularLocation>
        <location evidence="3">Cytoplasm</location>
    </subcellularLocation>
    <subcellularLocation>
        <location evidence="3">Nucleus</location>
        <location evidence="3">Nucleolus</location>
    </subcellularLocation>
    <subcellularLocation>
        <location evidence="3">Nucleus</location>
        <location evidence="3">Nucleoplasm</location>
    </subcellularLocation>
    <text evidence="3">Shuttles between the nucleus and the cytoplasm. Nuclear export is mediated by XPO1/CRM1.</text>
</comment>
<comment type="alternative products">
    <event type="alternative splicing"/>
    <isoform>
        <id>Q8CHP5-1</id>
        <name>1</name>
        <sequence type="displayed"/>
    </isoform>
    <isoform>
        <id>Q8CHP5-2</id>
        <name>2</name>
        <sequence type="described" ref="VSP_025431"/>
    </isoform>
</comment>
<comment type="domain">
    <text evidence="1">The eIF2A-like region shares sequence similarity with eIF2A and mediates the interaction with the 40S ribosomal subunit and the 48S preinitiation complex.</text>
</comment>
<comment type="similarity">
    <text evidence="7">Belongs to the pym family.</text>
</comment>